<comment type="function">
    <text evidence="1">The glycine cleavage system catalyzes the degradation of glycine.</text>
</comment>
<comment type="catalytic activity">
    <reaction evidence="1">
        <text>N(6)-[(R)-S(8)-aminomethyldihydrolipoyl]-L-lysyl-[protein] + (6S)-5,6,7,8-tetrahydrofolate = N(6)-[(R)-dihydrolipoyl]-L-lysyl-[protein] + (6R)-5,10-methylene-5,6,7,8-tetrahydrofolate + NH4(+)</text>
        <dbReference type="Rhea" id="RHEA:16945"/>
        <dbReference type="Rhea" id="RHEA-COMP:10475"/>
        <dbReference type="Rhea" id="RHEA-COMP:10492"/>
        <dbReference type="ChEBI" id="CHEBI:15636"/>
        <dbReference type="ChEBI" id="CHEBI:28938"/>
        <dbReference type="ChEBI" id="CHEBI:57453"/>
        <dbReference type="ChEBI" id="CHEBI:83100"/>
        <dbReference type="ChEBI" id="CHEBI:83143"/>
        <dbReference type="EC" id="2.1.2.10"/>
    </reaction>
</comment>
<comment type="subunit">
    <text evidence="1">The glycine cleavage system is composed of four proteins: P, T, L and H.</text>
</comment>
<comment type="similarity">
    <text evidence="1">Belongs to the GcvT family.</text>
</comment>
<feature type="chain" id="PRO_1000114082" description="Aminomethyltransferase">
    <location>
        <begin position="1"/>
        <end position="372"/>
    </location>
</feature>
<proteinExistence type="inferred from homology"/>
<keyword id="KW-0032">Aminotransferase</keyword>
<keyword id="KW-0808">Transferase</keyword>
<organism>
    <name type="scientific">Burkholderia cenocepacia (strain ATCC BAA-245 / DSM 16553 / LMG 16656 / NCTC 13227 / J2315 / CF5610)</name>
    <name type="common">Burkholderia cepacia (strain J2315)</name>
    <dbReference type="NCBI Taxonomy" id="216591"/>
    <lineage>
        <taxon>Bacteria</taxon>
        <taxon>Pseudomonadati</taxon>
        <taxon>Pseudomonadota</taxon>
        <taxon>Betaproteobacteria</taxon>
        <taxon>Burkholderiales</taxon>
        <taxon>Burkholderiaceae</taxon>
        <taxon>Burkholderia</taxon>
        <taxon>Burkholderia cepacia complex</taxon>
    </lineage>
</organism>
<gene>
    <name evidence="1" type="primary">gcvT</name>
    <name type="ordered locus">BceJ2315_00750</name>
    <name type="ORF">BCAL0075</name>
</gene>
<reference key="1">
    <citation type="journal article" date="2009" name="J. Bacteriol.">
        <title>The genome of Burkholderia cenocepacia J2315, an epidemic pathogen of cystic fibrosis patients.</title>
        <authorList>
            <person name="Holden M.T."/>
            <person name="Seth-Smith H.M."/>
            <person name="Crossman L.C."/>
            <person name="Sebaihia M."/>
            <person name="Bentley S.D."/>
            <person name="Cerdeno-Tarraga A.M."/>
            <person name="Thomson N.R."/>
            <person name="Bason N."/>
            <person name="Quail M.A."/>
            <person name="Sharp S."/>
            <person name="Cherevach I."/>
            <person name="Churcher C."/>
            <person name="Goodhead I."/>
            <person name="Hauser H."/>
            <person name="Holroyd N."/>
            <person name="Mungall K."/>
            <person name="Scott P."/>
            <person name="Walker D."/>
            <person name="White B."/>
            <person name="Rose H."/>
            <person name="Iversen P."/>
            <person name="Mil-Homens D."/>
            <person name="Rocha E.P."/>
            <person name="Fialho A.M."/>
            <person name="Baldwin A."/>
            <person name="Dowson C."/>
            <person name="Barrell B.G."/>
            <person name="Govan J.R."/>
            <person name="Vandamme P."/>
            <person name="Hart C.A."/>
            <person name="Mahenthiralingam E."/>
            <person name="Parkhill J."/>
        </authorList>
    </citation>
    <scope>NUCLEOTIDE SEQUENCE [LARGE SCALE GENOMIC DNA]</scope>
    <source>
        <strain>ATCC BAA-245 / DSM 16553 / LMG 16656 / NCTC 13227 / J2315 / CF5610</strain>
    </source>
</reference>
<sequence>MTALNHTPLNAAHRALNARMVDFGGWDMPVNYGSQIEEHAAVRTDAGMFDVSHMCVVDFTGSRVRAFFEHAIANNVGKLKTPGKALYSCLLNPQGGVIDDLIVYYFTEEFFRVVVNAGTADKDIAWFNQLNEQGGYGLTIAPRRDFAIVAVQGPNAREKVWATVPSARAATSELKPFNAAQVAGTPFGDLTIARTGYTGEDGFEVIVPAVHVEVLWNALQQHGVRPCGLGARDTLRLEAGMNLYGQDMDDTVSPLDAGLAWTVDLAAPRDFVGRAALEANGTRAAFVGLILQKENGKAGGVLRAHQKVVTPHGEGEITSGTFSPSMQESIAFARVPAAVQIGDTVQVQIRDKNLPARVVKLPFVRNGKVLAA</sequence>
<dbReference type="EC" id="2.1.2.10" evidence="1"/>
<dbReference type="EMBL" id="AM747720">
    <property type="protein sequence ID" value="CAR50381.1"/>
    <property type="molecule type" value="Genomic_DNA"/>
</dbReference>
<dbReference type="RefSeq" id="WP_006485675.1">
    <property type="nucleotide sequence ID" value="NC_011000.1"/>
</dbReference>
<dbReference type="SMR" id="B4EF28"/>
<dbReference type="KEGG" id="bcj:BCAL0075"/>
<dbReference type="eggNOG" id="COG0404">
    <property type="taxonomic scope" value="Bacteria"/>
</dbReference>
<dbReference type="HOGENOM" id="CLU_007884_10_2_4"/>
<dbReference type="BioCyc" id="BCEN216591:G1G1V-88-MONOMER"/>
<dbReference type="Proteomes" id="UP000001035">
    <property type="component" value="Chromosome 1"/>
</dbReference>
<dbReference type="GO" id="GO:0005829">
    <property type="term" value="C:cytosol"/>
    <property type="evidence" value="ECO:0007669"/>
    <property type="project" value="TreeGrafter"/>
</dbReference>
<dbReference type="GO" id="GO:0005960">
    <property type="term" value="C:glycine cleavage complex"/>
    <property type="evidence" value="ECO:0007669"/>
    <property type="project" value="InterPro"/>
</dbReference>
<dbReference type="GO" id="GO:0004047">
    <property type="term" value="F:aminomethyltransferase activity"/>
    <property type="evidence" value="ECO:0007669"/>
    <property type="project" value="UniProtKB-UniRule"/>
</dbReference>
<dbReference type="GO" id="GO:0008483">
    <property type="term" value="F:transaminase activity"/>
    <property type="evidence" value="ECO:0007669"/>
    <property type="project" value="UniProtKB-KW"/>
</dbReference>
<dbReference type="GO" id="GO:0019464">
    <property type="term" value="P:glycine decarboxylation via glycine cleavage system"/>
    <property type="evidence" value="ECO:0007669"/>
    <property type="project" value="UniProtKB-UniRule"/>
</dbReference>
<dbReference type="FunFam" id="3.30.70.1400:FF:000001">
    <property type="entry name" value="Aminomethyltransferase"/>
    <property type="match status" value="1"/>
</dbReference>
<dbReference type="FunFam" id="4.10.1250.10:FF:000001">
    <property type="entry name" value="Aminomethyltransferase"/>
    <property type="match status" value="1"/>
</dbReference>
<dbReference type="Gene3D" id="2.40.30.110">
    <property type="entry name" value="Aminomethyltransferase beta-barrel domains"/>
    <property type="match status" value="1"/>
</dbReference>
<dbReference type="Gene3D" id="3.30.70.1400">
    <property type="entry name" value="Aminomethyltransferase beta-barrel domains"/>
    <property type="match status" value="1"/>
</dbReference>
<dbReference type="Gene3D" id="4.10.1250.10">
    <property type="entry name" value="Aminomethyltransferase fragment"/>
    <property type="match status" value="1"/>
</dbReference>
<dbReference type="Gene3D" id="3.30.1360.120">
    <property type="entry name" value="Probable tRNA modification gtpase trme, domain 1"/>
    <property type="match status" value="1"/>
</dbReference>
<dbReference type="HAMAP" id="MF_00259">
    <property type="entry name" value="GcvT"/>
    <property type="match status" value="1"/>
</dbReference>
<dbReference type="InterPro" id="IPR006223">
    <property type="entry name" value="GCS_T"/>
</dbReference>
<dbReference type="InterPro" id="IPR022903">
    <property type="entry name" value="GCS_T_bac"/>
</dbReference>
<dbReference type="InterPro" id="IPR013977">
    <property type="entry name" value="GCST_C"/>
</dbReference>
<dbReference type="InterPro" id="IPR006222">
    <property type="entry name" value="GCV_T_N"/>
</dbReference>
<dbReference type="InterPro" id="IPR028896">
    <property type="entry name" value="GcvT/YgfZ/DmdA"/>
</dbReference>
<dbReference type="InterPro" id="IPR029043">
    <property type="entry name" value="GcvT/YgfZ_C"/>
</dbReference>
<dbReference type="InterPro" id="IPR027266">
    <property type="entry name" value="TrmE/GcvT_dom1"/>
</dbReference>
<dbReference type="NCBIfam" id="TIGR00528">
    <property type="entry name" value="gcvT"/>
    <property type="match status" value="1"/>
</dbReference>
<dbReference type="NCBIfam" id="NF001567">
    <property type="entry name" value="PRK00389.1"/>
    <property type="match status" value="1"/>
</dbReference>
<dbReference type="PANTHER" id="PTHR43757">
    <property type="entry name" value="AMINOMETHYLTRANSFERASE"/>
    <property type="match status" value="1"/>
</dbReference>
<dbReference type="PANTHER" id="PTHR43757:SF2">
    <property type="entry name" value="AMINOMETHYLTRANSFERASE, MITOCHONDRIAL"/>
    <property type="match status" value="1"/>
</dbReference>
<dbReference type="Pfam" id="PF01571">
    <property type="entry name" value="GCV_T"/>
    <property type="match status" value="1"/>
</dbReference>
<dbReference type="Pfam" id="PF08669">
    <property type="entry name" value="GCV_T_C"/>
    <property type="match status" value="1"/>
</dbReference>
<dbReference type="PIRSF" id="PIRSF006487">
    <property type="entry name" value="GcvT"/>
    <property type="match status" value="1"/>
</dbReference>
<dbReference type="SUPFAM" id="SSF101790">
    <property type="entry name" value="Aminomethyltransferase beta-barrel domain"/>
    <property type="match status" value="1"/>
</dbReference>
<dbReference type="SUPFAM" id="SSF103025">
    <property type="entry name" value="Folate-binding domain"/>
    <property type="match status" value="1"/>
</dbReference>
<evidence type="ECO:0000255" key="1">
    <source>
        <dbReference type="HAMAP-Rule" id="MF_00259"/>
    </source>
</evidence>
<protein>
    <recommendedName>
        <fullName evidence="1">Aminomethyltransferase</fullName>
        <ecNumber evidence="1">2.1.2.10</ecNumber>
    </recommendedName>
    <alternativeName>
        <fullName evidence="1">Glycine cleavage system T protein</fullName>
    </alternativeName>
</protein>
<name>GCST_BURCJ</name>
<accession>B4EF28</accession>